<feature type="chain" id="PRO_1000007576" description="Large ribosomal subunit protein uL29">
    <location>
        <begin position="1"/>
        <end position="64"/>
    </location>
</feature>
<proteinExistence type="inferred from homology"/>
<organism>
    <name type="scientific">Cupriavidus metallidurans (strain ATCC 43123 / DSM 2839 / NBRC 102507 / CH34)</name>
    <name type="common">Ralstonia metallidurans</name>
    <dbReference type="NCBI Taxonomy" id="266264"/>
    <lineage>
        <taxon>Bacteria</taxon>
        <taxon>Pseudomonadati</taxon>
        <taxon>Pseudomonadota</taxon>
        <taxon>Betaproteobacteria</taxon>
        <taxon>Burkholderiales</taxon>
        <taxon>Burkholderiaceae</taxon>
        <taxon>Cupriavidus</taxon>
    </lineage>
</organism>
<accession>Q1LI45</accession>
<comment type="similarity">
    <text evidence="1">Belongs to the universal ribosomal protein uL29 family.</text>
</comment>
<gene>
    <name evidence="1" type="primary">rpmC</name>
    <name type="ordered locus">Rmet_3309</name>
</gene>
<evidence type="ECO:0000255" key="1">
    <source>
        <dbReference type="HAMAP-Rule" id="MF_00374"/>
    </source>
</evidence>
<evidence type="ECO:0000305" key="2"/>
<name>RL29_CUPMC</name>
<protein>
    <recommendedName>
        <fullName evidence="1">Large ribosomal subunit protein uL29</fullName>
    </recommendedName>
    <alternativeName>
        <fullName evidence="2">50S ribosomal protein L29</fullName>
    </alternativeName>
</protein>
<reference key="1">
    <citation type="journal article" date="2010" name="PLoS ONE">
        <title>The complete genome sequence of Cupriavidus metallidurans strain CH34, a master survivalist in harsh and anthropogenic environments.</title>
        <authorList>
            <person name="Janssen P.J."/>
            <person name="Van Houdt R."/>
            <person name="Moors H."/>
            <person name="Monsieurs P."/>
            <person name="Morin N."/>
            <person name="Michaux A."/>
            <person name="Benotmane M.A."/>
            <person name="Leys N."/>
            <person name="Vallaeys T."/>
            <person name="Lapidus A."/>
            <person name="Monchy S."/>
            <person name="Medigue C."/>
            <person name="Taghavi S."/>
            <person name="McCorkle S."/>
            <person name="Dunn J."/>
            <person name="van der Lelie D."/>
            <person name="Mergeay M."/>
        </authorList>
    </citation>
    <scope>NUCLEOTIDE SEQUENCE [LARGE SCALE GENOMIC DNA]</scope>
    <source>
        <strain>ATCC 43123 / DSM 2839 / NBRC 102507 / CH34</strain>
    </source>
</reference>
<dbReference type="EMBL" id="CP000352">
    <property type="protein sequence ID" value="ABF10181.1"/>
    <property type="molecule type" value="Genomic_DNA"/>
</dbReference>
<dbReference type="RefSeq" id="WP_008642937.1">
    <property type="nucleotide sequence ID" value="NC_007973.1"/>
</dbReference>
<dbReference type="SMR" id="Q1LI45"/>
<dbReference type="STRING" id="266264.Rmet_3309"/>
<dbReference type="GeneID" id="92818451"/>
<dbReference type="KEGG" id="rme:Rmet_3309"/>
<dbReference type="eggNOG" id="COG0255">
    <property type="taxonomic scope" value="Bacteria"/>
</dbReference>
<dbReference type="HOGENOM" id="CLU_158491_1_1_4"/>
<dbReference type="Proteomes" id="UP000002429">
    <property type="component" value="Chromosome"/>
</dbReference>
<dbReference type="GO" id="GO:0022625">
    <property type="term" value="C:cytosolic large ribosomal subunit"/>
    <property type="evidence" value="ECO:0007669"/>
    <property type="project" value="TreeGrafter"/>
</dbReference>
<dbReference type="GO" id="GO:0003735">
    <property type="term" value="F:structural constituent of ribosome"/>
    <property type="evidence" value="ECO:0007669"/>
    <property type="project" value="InterPro"/>
</dbReference>
<dbReference type="GO" id="GO:0006412">
    <property type="term" value="P:translation"/>
    <property type="evidence" value="ECO:0007669"/>
    <property type="project" value="UniProtKB-UniRule"/>
</dbReference>
<dbReference type="CDD" id="cd00427">
    <property type="entry name" value="Ribosomal_L29_HIP"/>
    <property type="match status" value="1"/>
</dbReference>
<dbReference type="FunFam" id="1.10.287.310:FF:000001">
    <property type="entry name" value="50S ribosomal protein L29"/>
    <property type="match status" value="1"/>
</dbReference>
<dbReference type="Gene3D" id="1.10.287.310">
    <property type="match status" value="1"/>
</dbReference>
<dbReference type="HAMAP" id="MF_00374">
    <property type="entry name" value="Ribosomal_uL29"/>
    <property type="match status" value="1"/>
</dbReference>
<dbReference type="InterPro" id="IPR050063">
    <property type="entry name" value="Ribosomal_protein_uL29"/>
</dbReference>
<dbReference type="InterPro" id="IPR001854">
    <property type="entry name" value="Ribosomal_uL29"/>
</dbReference>
<dbReference type="InterPro" id="IPR018254">
    <property type="entry name" value="Ribosomal_uL29_CS"/>
</dbReference>
<dbReference type="InterPro" id="IPR036049">
    <property type="entry name" value="Ribosomal_uL29_sf"/>
</dbReference>
<dbReference type="NCBIfam" id="TIGR00012">
    <property type="entry name" value="L29"/>
    <property type="match status" value="1"/>
</dbReference>
<dbReference type="PANTHER" id="PTHR10916">
    <property type="entry name" value="60S RIBOSOMAL PROTEIN L35/50S RIBOSOMAL PROTEIN L29"/>
    <property type="match status" value="1"/>
</dbReference>
<dbReference type="PANTHER" id="PTHR10916:SF0">
    <property type="entry name" value="LARGE RIBOSOMAL SUBUNIT PROTEIN UL29C"/>
    <property type="match status" value="1"/>
</dbReference>
<dbReference type="Pfam" id="PF00831">
    <property type="entry name" value="Ribosomal_L29"/>
    <property type="match status" value="1"/>
</dbReference>
<dbReference type="SUPFAM" id="SSF46561">
    <property type="entry name" value="Ribosomal protein L29 (L29p)"/>
    <property type="match status" value="1"/>
</dbReference>
<dbReference type="PROSITE" id="PS00579">
    <property type="entry name" value="RIBOSOMAL_L29"/>
    <property type="match status" value="1"/>
</dbReference>
<sequence>MKASELRGKDAAGLNQELSELLKAQFSLRMQKATQQLQNTSQLKKVRKDIARVQTVLTEKANAK</sequence>
<keyword id="KW-1185">Reference proteome</keyword>
<keyword id="KW-0687">Ribonucleoprotein</keyword>
<keyword id="KW-0689">Ribosomal protein</keyword>